<keyword id="KW-0880">Kelch repeat</keyword>
<keyword id="KW-1185">Reference proteome</keyword>
<keyword id="KW-0677">Repeat</keyword>
<proteinExistence type="evidence at transcript level"/>
<gene>
    <name type="primary">FBX6</name>
    <name type="ordered locus">At1g27340</name>
    <name type="ORF">F17L21.13</name>
</gene>
<evidence type="ECO:0000255" key="1">
    <source>
        <dbReference type="PROSITE-ProRule" id="PRU00080"/>
    </source>
</evidence>
<evidence type="ECO:0000305" key="2"/>
<accession>Q9FZK1</accession>
<accession>Q8LEE1</accession>
<protein>
    <recommendedName>
        <fullName>F-box only protein 6</fullName>
    </recommendedName>
</protein>
<dbReference type="EMBL" id="AC004557">
    <property type="protein sequence ID" value="AAF99732.1"/>
    <property type="molecule type" value="Genomic_DNA"/>
</dbReference>
<dbReference type="EMBL" id="CP002684">
    <property type="protein sequence ID" value="AEE30808.1"/>
    <property type="molecule type" value="Genomic_DNA"/>
</dbReference>
<dbReference type="EMBL" id="AY085471">
    <property type="protein sequence ID" value="AAM62697.1"/>
    <property type="molecule type" value="mRNA"/>
</dbReference>
<dbReference type="EMBL" id="BT025325">
    <property type="protein sequence ID" value="ABF57281.1"/>
    <property type="molecule type" value="mRNA"/>
</dbReference>
<dbReference type="RefSeq" id="NP_564278.1">
    <property type="nucleotide sequence ID" value="NM_102496.4"/>
</dbReference>
<dbReference type="SMR" id="Q9FZK1"/>
<dbReference type="BioGRID" id="24858">
    <property type="interactions" value="7"/>
</dbReference>
<dbReference type="FunCoup" id="Q9FZK1">
    <property type="interactions" value="1397"/>
</dbReference>
<dbReference type="IntAct" id="Q9FZK1">
    <property type="interactions" value="7"/>
</dbReference>
<dbReference type="STRING" id="3702.Q9FZK1"/>
<dbReference type="PaxDb" id="3702-AT1G27340.1"/>
<dbReference type="EnsemblPlants" id="AT1G27340.1">
    <property type="protein sequence ID" value="AT1G27340.1"/>
    <property type="gene ID" value="AT1G27340"/>
</dbReference>
<dbReference type="GeneID" id="839623"/>
<dbReference type="Gramene" id="AT1G27340.1">
    <property type="protein sequence ID" value="AT1G27340.1"/>
    <property type="gene ID" value="AT1G27340"/>
</dbReference>
<dbReference type="KEGG" id="ath:AT1G27340"/>
<dbReference type="Araport" id="AT1G27340"/>
<dbReference type="TAIR" id="AT1G27340">
    <property type="gene designation" value="LCR"/>
</dbReference>
<dbReference type="eggNOG" id="ENOG502QQ35">
    <property type="taxonomic scope" value="Eukaryota"/>
</dbReference>
<dbReference type="HOGENOM" id="CLU_038778_2_1_1"/>
<dbReference type="InParanoid" id="Q9FZK1"/>
<dbReference type="OMA" id="CAEPEGV"/>
<dbReference type="OrthoDB" id="6482909at2759"/>
<dbReference type="PhylomeDB" id="Q9FZK1"/>
<dbReference type="PRO" id="PR:Q9FZK1"/>
<dbReference type="Proteomes" id="UP000006548">
    <property type="component" value="Chromosome 1"/>
</dbReference>
<dbReference type="ExpressionAtlas" id="Q9FZK1">
    <property type="expression patterns" value="baseline and differential"/>
</dbReference>
<dbReference type="GO" id="GO:0010305">
    <property type="term" value="P:leaf vascular tissue pattern formation"/>
    <property type="evidence" value="ECO:0000315"/>
    <property type="project" value="TAIR"/>
</dbReference>
<dbReference type="GO" id="GO:0010928">
    <property type="term" value="P:regulation of auxin mediated signaling pathway"/>
    <property type="evidence" value="ECO:0000315"/>
    <property type="project" value="TAIR"/>
</dbReference>
<dbReference type="GO" id="GO:0060776">
    <property type="term" value="P:simple leaf morphogenesis"/>
    <property type="evidence" value="ECO:0000315"/>
    <property type="project" value="TAIR"/>
</dbReference>
<dbReference type="CDD" id="cd22157">
    <property type="entry name" value="F-box_AtFBW1-like"/>
    <property type="match status" value="1"/>
</dbReference>
<dbReference type="FunFam" id="1.20.1280.50:FF:000008">
    <property type="entry name" value="F-box only protein 6"/>
    <property type="match status" value="1"/>
</dbReference>
<dbReference type="FunFam" id="2.120.10.80:FF:000059">
    <property type="entry name" value="F-box only protein 6"/>
    <property type="match status" value="1"/>
</dbReference>
<dbReference type="Gene3D" id="1.20.1280.50">
    <property type="match status" value="1"/>
</dbReference>
<dbReference type="Gene3D" id="2.120.10.80">
    <property type="entry name" value="Kelch-type beta propeller"/>
    <property type="match status" value="1"/>
</dbReference>
<dbReference type="InterPro" id="IPR056592">
    <property type="entry name" value="At3g26010-like_b-prop"/>
</dbReference>
<dbReference type="InterPro" id="IPR036047">
    <property type="entry name" value="F-box-like_dom_sf"/>
</dbReference>
<dbReference type="InterPro" id="IPR001810">
    <property type="entry name" value="F-box_dom"/>
</dbReference>
<dbReference type="InterPro" id="IPR011043">
    <property type="entry name" value="Gal_Oxase/kelch_b-propeller"/>
</dbReference>
<dbReference type="InterPro" id="IPR015915">
    <property type="entry name" value="Kelch-typ_b-propeller"/>
</dbReference>
<dbReference type="InterPro" id="IPR050796">
    <property type="entry name" value="SCF_F-box_component"/>
</dbReference>
<dbReference type="PANTHER" id="PTHR31672">
    <property type="entry name" value="BNACNNG10540D PROTEIN"/>
    <property type="match status" value="1"/>
</dbReference>
<dbReference type="PANTHER" id="PTHR31672:SF12">
    <property type="entry name" value="F-BOX DOMAIN-CONTAINING PROTEIN"/>
    <property type="match status" value="1"/>
</dbReference>
<dbReference type="Pfam" id="PF24750">
    <property type="entry name" value="b-prop_At3g26010-like"/>
    <property type="match status" value="1"/>
</dbReference>
<dbReference type="Pfam" id="PF00646">
    <property type="entry name" value="F-box"/>
    <property type="match status" value="1"/>
</dbReference>
<dbReference type="SMART" id="SM00256">
    <property type="entry name" value="FBOX"/>
    <property type="match status" value="1"/>
</dbReference>
<dbReference type="SUPFAM" id="SSF81383">
    <property type="entry name" value="F-box domain"/>
    <property type="match status" value="1"/>
</dbReference>
<dbReference type="SUPFAM" id="SSF50965">
    <property type="entry name" value="Galactose oxidase, central domain"/>
    <property type="match status" value="1"/>
</dbReference>
<dbReference type="PROSITE" id="PS50181">
    <property type="entry name" value="FBOX"/>
    <property type="match status" value="1"/>
</dbReference>
<sequence length="467" mass="52822">MEEELAMLRQLIGQLQELLHNGSPPPPSSSSSLSSSSPSFLVLHHPQYQNGWCLPCIEDTSADDCCDIVMAGGKRPGIFKMLETVKPPVKRTRKERTQGKSCTEVDEISGNMDQEIWQEFPQDLFEDVVSRLPMATFFQFRAVCRKWNALIDSDSFSRCFTELPQTIPWFYTITHENVNSGQVYDPSLKKWHHPIIPALPKKSIVLPMASAGGLVCFLDIGHRNFYVSNPLTKSFRELPARSFKVWSRVAVGMTLNGNSTSHGYKVLWVGCEGEYEVYDSLSNVWTKRGTIPSNIKLPVLLNFKSQPVAIHSTLYFMLTDPEGILSYDMVSGKWKQFIIPGPPDLSDHTLAACGERLMLVGLLTKNAATCVCIWELQKMTLLWKEVDRMPNIWCLEFYGKHIRMNCLGNKGCLILLSLRSRQMNRLITYNAVTREWTKVPGCTVPRGRKRLWIACGTAFHPSPTARA</sequence>
<name>FBX6_ARATH</name>
<reference key="1">
    <citation type="journal article" date="2000" name="Nature">
        <title>Sequence and analysis of chromosome 1 of the plant Arabidopsis thaliana.</title>
        <authorList>
            <person name="Theologis A."/>
            <person name="Ecker J.R."/>
            <person name="Palm C.J."/>
            <person name="Federspiel N.A."/>
            <person name="Kaul S."/>
            <person name="White O."/>
            <person name="Alonso J."/>
            <person name="Altafi H."/>
            <person name="Araujo R."/>
            <person name="Bowman C.L."/>
            <person name="Brooks S.Y."/>
            <person name="Buehler E."/>
            <person name="Chan A."/>
            <person name="Chao Q."/>
            <person name="Chen H."/>
            <person name="Cheuk R.F."/>
            <person name="Chin C.W."/>
            <person name="Chung M.K."/>
            <person name="Conn L."/>
            <person name="Conway A.B."/>
            <person name="Conway A.R."/>
            <person name="Creasy T.H."/>
            <person name="Dewar K."/>
            <person name="Dunn P."/>
            <person name="Etgu P."/>
            <person name="Feldblyum T.V."/>
            <person name="Feng J.-D."/>
            <person name="Fong B."/>
            <person name="Fujii C.Y."/>
            <person name="Gill J.E."/>
            <person name="Goldsmith A.D."/>
            <person name="Haas B."/>
            <person name="Hansen N.F."/>
            <person name="Hughes B."/>
            <person name="Huizar L."/>
            <person name="Hunter J.L."/>
            <person name="Jenkins J."/>
            <person name="Johnson-Hopson C."/>
            <person name="Khan S."/>
            <person name="Khaykin E."/>
            <person name="Kim C.J."/>
            <person name="Koo H.L."/>
            <person name="Kremenetskaia I."/>
            <person name="Kurtz D.B."/>
            <person name="Kwan A."/>
            <person name="Lam B."/>
            <person name="Langin-Hooper S."/>
            <person name="Lee A."/>
            <person name="Lee J.M."/>
            <person name="Lenz C.A."/>
            <person name="Li J.H."/>
            <person name="Li Y.-P."/>
            <person name="Lin X."/>
            <person name="Liu S.X."/>
            <person name="Liu Z.A."/>
            <person name="Luros J.S."/>
            <person name="Maiti R."/>
            <person name="Marziali A."/>
            <person name="Militscher J."/>
            <person name="Miranda M."/>
            <person name="Nguyen M."/>
            <person name="Nierman W.C."/>
            <person name="Osborne B.I."/>
            <person name="Pai G."/>
            <person name="Peterson J."/>
            <person name="Pham P.K."/>
            <person name="Rizzo M."/>
            <person name="Rooney T."/>
            <person name="Rowley D."/>
            <person name="Sakano H."/>
            <person name="Salzberg S.L."/>
            <person name="Schwartz J.R."/>
            <person name="Shinn P."/>
            <person name="Southwick A.M."/>
            <person name="Sun H."/>
            <person name="Tallon L.J."/>
            <person name="Tambunga G."/>
            <person name="Toriumi M.J."/>
            <person name="Town C.D."/>
            <person name="Utterback T."/>
            <person name="Van Aken S."/>
            <person name="Vaysberg M."/>
            <person name="Vysotskaia V.S."/>
            <person name="Walker M."/>
            <person name="Wu D."/>
            <person name="Yu G."/>
            <person name="Fraser C.M."/>
            <person name="Venter J.C."/>
            <person name="Davis R.W."/>
        </authorList>
    </citation>
    <scope>NUCLEOTIDE SEQUENCE [LARGE SCALE GENOMIC DNA]</scope>
    <source>
        <strain>cv. Columbia</strain>
    </source>
</reference>
<reference key="2">
    <citation type="journal article" date="2017" name="Plant J.">
        <title>Araport11: a complete reannotation of the Arabidopsis thaliana reference genome.</title>
        <authorList>
            <person name="Cheng C.Y."/>
            <person name="Krishnakumar V."/>
            <person name="Chan A.P."/>
            <person name="Thibaud-Nissen F."/>
            <person name="Schobel S."/>
            <person name="Town C.D."/>
        </authorList>
    </citation>
    <scope>GENOME REANNOTATION</scope>
    <source>
        <strain>cv. Columbia</strain>
    </source>
</reference>
<reference key="3">
    <citation type="submission" date="2002-03" db="EMBL/GenBank/DDBJ databases">
        <title>Full-length cDNA from Arabidopsis thaliana.</title>
        <authorList>
            <person name="Brover V.V."/>
            <person name="Troukhan M.E."/>
            <person name="Alexandrov N.A."/>
            <person name="Lu Y.-P."/>
            <person name="Flavell R.B."/>
            <person name="Feldmann K.A."/>
        </authorList>
    </citation>
    <scope>NUCLEOTIDE SEQUENCE [LARGE SCALE MRNA]</scope>
</reference>
<reference key="4">
    <citation type="submission" date="2006-05" db="EMBL/GenBank/DDBJ databases">
        <title>Arabidopsis ORF clones.</title>
        <authorList>
            <person name="Shinn P."/>
            <person name="Chen H."/>
            <person name="Kim C.J."/>
            <person name="Quinitio C."/>
            <person name="Ecker J.R."/>
        </authorList>
    </citation>
    <scope>NUCLEOTIDE SEQUENCE [LARGE SCALE MRNA]</scope>
    <source>
        <strain>cv. Columbia</strain>
    </source>
</reference>
<reference key="5">
    <citation type="journal article" date="2000" name="Trends Plant Sci.">
        <title>F-box proteins in Arabidopsis.</title>
        <authorList>
            <person name="Xiao W."/>
            <person name="Jang J.-C."/>
        </authorList>
    </citation>
    <scope>GENE FAMILY</scope>
    <scope>NOMENCLATURE</scope>
</reference>
<feature type="chain" id="PRO_0000273539" description="F-box only protein 6">
    <location>
        <begin position="1"/>
        <end position="467"/>
    </location>
</feature>
<feature type="domain" description="F-box" evidence="1">
    <location>
        <begin position="114"/>
        <end position="163"/>
    </location>
</feature>
<feature type="repeat" description="Kelch 1">
    <location>
        <begin position="163"/>
        <end position="211"/>
    </location>
</feature>
<feature type="repeat" description="Kelch 2">
    <location>
        <begin position="252"/>
        <end position="305"/>
    </location>
</feature>
<feature type="repeat" description="Kelch 3">
    <location>
        <begin position="406"/>
        <end position="456"/>
    </location>
</feature>
<feature type="sequence conflict" description="In Ref. 3; AAM62697." evidence="2" ref="3">
    <original>S</original>
    <variation>F</variation>
    <location>
        <position position="259"/>
    </location>
</feature>
<organism>
    <name type="scientific">Arabidopsis thaliana</name>
    <name type="common">Mouse-ear cress</name>
    <dbReference type="NCBI Taxonomy" id="3702"/>
    <lineage>
        <taxon>Eukaryota</taxon>
        <taxon>Viridiplantae</taxon>
        <taxon>Streptophyta</taxon>
        <taxon>Embryophyta</taxon>
        <taxon>Tracheophyta</taxon>
        <taxon>Spermatophyta</taxon>
        <taxon>Magnoliopsida</taxon>
        <taxon>eudicotyledons</taxon>
        <taxon>Gunneridae</taxon>
        <taxon>Pentapetalae</taxon>
        <taxon>rosids</taxon>
        <taxon>malvids</taxon>
        <taxon>Brassicales</taxon>
        <taxon>Brassicaceae</taxon>
        <taxon>Camelineae</taxon>
        <taxon>Arabidopsis</taxon>
    </lineage>
</organism>